<gene>
    <name evidence="1" type="primary">rps11</name>
</gene>
<reference key="1">
    <citation type="journal article" date="2007" name="Plant Biotechnol. J.">
        <title>The complete nucleotide sequence of the coffee (Coffea arabica L.) chloroplast genome: organization and implications for biotechnology and phylogenetic relationships amongst angiosperms.</title>
        <authorList>
            <person name="Samson N."/>
            <person name="Bausher M.G."/>
            <person name="Lee S.-B."/>
            <person name="Jansen R.K."/>
            <person name="Daniell H."/>
        </authorList>
    </citation>
    <scope>NUCLEOTIDE SEQUENCE [LARGE SCALE GENOMIC DNA]</scope>
</reference>
<name>RR11_COFAR</name>
<sequence length="138" mass="14952">MAKAIPRVGSRKNGRISSRKSARRIPKGVIHVQASFHNTIVTVTDVRGRVVSWSSAGTCGFRGTRRGTPFAAQTAAANAIRTVVDQGMQRAEVMIKGPGLGRDAALRAIRRSGIVLTFVRDVTPMPHNGCRPPKKRRV</sequence>
<protein>
    <recommendedName>
        <fullName evidence="1">Small ribosomal subunit protein uS11c</fullName>
    </recommendedName>
    <alternativeName>
        <fullName evidence="3">30S ribosomal protein S11, chloroplastic</fullName>
    </alternativeName>
</protein>
<evidence type="ECO:0000255" key="1">
    <source>
        <dbReference type="HAMAP-Rule" id="MF_01310"/>
    </source>
</evidence>
<evidence type="ECO:0000256" key="2">
    <source>
        <dbReference type="SAM" id="MobiDB-lite"/>
    </source>
</evidence>
<evidence type="ECO:0000305" key="3"/>
<geneLocation type="chloroplast"/>
<dbReference type="EMBL" id="EF044213">
    <property type="protein sequence ID" value="ABJ89711.1"/>
    <property type="molecule type" value="Genomic_DNA"/>
</dbReference>
<dbReference type="RefSeq" id="YP_817515.1">
    <property type="nucleotide sequence ID" value="NC_008535.1"/>
</dbReference>
<dbReference type="SMR" id="A0A368"/>
<dbReference type="GeneID" id="4421761"/>
<dbReference type="OrthoDB" id="535480at2759"/>
<dbReference type="Proteomes" id="UP000515148">
    <property type="component" value="Chloroplast Pltd"/>
</dbReference>
<dbReference type="GO" id="GO:0009507">
    <property type="term" value="C:chloroplast"/>
    <property type="evidence" value="ECO:0007669"/>
    <property type="project" value="UniProtKB-SubCell"/>
</dbReference>
<dbReference type="GO" id="GO:1990904">
    <property type="term" value="C:ribonucleoprotein complex"/>
    <property type="evidence" value="ECO:0007669"/>
    <property type="project" value="UniProtKB-KW"/>
</dbReference>
<dbReference type="GO" id="GO:0005840">
    <property type="term" value="C:ribosome"/>
    <property type="evidence" value="ECO:0007669"/>
    <property type="project" value="UniProtKB-KW"/>
</dbReference>
<dbReference type="GO" id="GO:0019843">
    <property type="term" value="F:rRNA binding"/>
    <property type="evidence" value="ECO:0007669"/>
    <property type="project" value="UniProtKB-UniRule"/>
</dbReference>
<dbReference type="GO" id="GO:0003735">
    <property type="term" value="F:structural constituent of ribosome"/>
    <property type="evidence" value="ECO:0007669"/>
    <property type="project" value="InterPro"/>
</dbReference>
<dbReference type="GO" id="GO:0006412">
    <property type="term" value="P:translation"/>
    <property type="evidence" value="ECO:0007669"/>
    <property type="project" value="UniProtKB-UniRule"/>
</dbReference>
<dbReference type="FunFam" id="3.30.420.80:FF:000003">
    <property type="entry name" value="30S ribosomal protein S11, chloroplastic"/>
    <property type="match status" value="1"/>
</dbReference>
<dbReference type="Gene3D" id="3.30.420.80">
    <property type="entry name" value="Ribosomal protein S11"/>
    <property type="match status" value="1"/>
</dbReference>
<dbReference type="HAMAP" id="MF_01310">
    <property type="entry name" value="Ribosomal_uS11"/>
    <property type="match status" value="1"/>
</dbReference>
<dbReference type="InterPro" id="IPR001971">
    <property type="entry name" value="Ribosomal_uS11"/>
</dbReference>
<dbReference type="InterPro" id="IPR019981">
    <property type="entry name" value="Ribosomal_uS11_bac-type"/>
</dbReference>
<dbReference type="InterPro" id="IPR018102">
    <property type="entry name" value="Ribosomal_uS11_CS"/>
</dbReference>
<dbReference type="InterPro" id="IPR036967">
    <property type="entry name" value="Ribosomal_uS11_sf"/>
</dbReference>
<dbReference type="NCBIfam" id="NF003698">
    <property type="entry name" value="PRK05309.1"/>
    <property type="match status" value="1"/>
</dbReference>
<dbReference type="NCBIfam" id="TIGR03632">
    <property type="entry name" value="uS11_bact"/>
    <property type="match status" value="1"/>
</dbReference>
<dbReference type="PANTHER" id="PTHR11759">
    <property type="entry name" value="40S RIBOSOMAL PROTEIN S14/30S RIBOSOMAL PROTEIN S11"/>
    <property type="match status" value="1"/>
</dbReference>
<dbReference type="Pfam" id="PF00411">
    <property type="entry name" value="Ribosomal_S11"/>
    <property type="match status" value="1"/>
</dbReference>
<dbReference type="PIRSF" id="PIRSF002131">
    <property type="entry name" value="Ribosomal_S11"/>
    <property type="match status" value="1"/>
</dbReference>
<dbReference type="SUPFAM" id="SSF53137">
    <property type="entry name" value="Translational machinery components"/>
    <property type="match status" value="1"/>
</dbReference>
<dbReference type="PROSITE" id="PS00054">
    <property type="entry name" value="RIBOSOMAL_S11"/>
    <property type="match status" value="1"/>
</dbReference>
<comment type="subunit">
    <text evidence="1">Part of the 30S ribosomal subunit.</text>
</comment>
<comment type="subcellular location">
    <subcellularLocation>
        <location>Plastid</location>
        <location>Chloroplast</location>
    </subcellularLocation>
</comment>
<comment type="similarity">
    <text evidence="1">Belongs to the universal ribosomal protein uS11 family.</text>
</comment>
<keyword id="KW-0150">Chloroplast</keyword>
<keyword id="KW-0934">Plastid</keyword>
<keyword id="KW-1185">Reference proteome</keyword>
<keyword id="KW-0687">Ribonucleoprotein</keyword>
<keyword id="KW-0689">Ribosomal protein</keyword>
<keyword id="KW-0694">RNA-binding</keyword>
<keyword id="KW-0699">rRNA-binding</keyword>
<accession>A0A368</accession>
<feature type="chain" id="PRO_0000276644" description="Small ribosomal subunit protein uS11c">
    <location>
        <begin position="1"/>
        <end position="138"/>
    </location>
</feature>
<feature type="region of interest" description="Disordered" evidence="2">
    <location>
        <begin position="1"/>
        <end position="23"/>
    </location>
</feature>
<feature type="compositionally biased region" description="Basic residues" evidence="2">
    <location>
        <begin position="9"/>
        <end position="23"/>
    </location>
</feature>
<proteinExistence type="inferred from homology"/>
<organism>
    <name type="scientific">Coffea arabica</name>
    <name type="common">Arabian coffee</name>
    <dbReference type="NCBI Taxonomy" id="13443"/>
    <lineage>
        <taxon>Eukaryota</taxon>
        <taxon>Viridiplantae</taxon>
        <taxon>Streptophyta</taxon>
        <taxon>Embryophyta</taxon>
        <taxon>Tracheophyta</taxon>
        <taxon>Spermatophyta</taxon>
        <taxon>Magnoliopsida</taxon>
        <taxon>eudicotyledons</taxon>
        <taxon>Gunneridae</taxon>
        <taxon>Pentapetalae</taxon>
        <taxon>asterids</taxon>
        <taxon>lamiids</taxon>
        <taxon>Gentianales</taxon>
        <taxon>Rubiaceae</taxon>
        <taxon>Ixoroideae</taxon>
        <taxon>Gardenieae complex</taxon>
        <taxon>Bertiereae - Coffeeae clade</taxon>
        <taxon>Coffeeae</taxon>
        <taxon>Coffea</taxon>
    </lineage>
</organism>